<keyword id="KW-0249">Electron transport</keyword>
<keyword id="KW-0285">Flavoprotein</keyword>
<keyword id="KW-0288">FMN</keyword>
<keyword id="KW-1185">Reference proteome</keyword>
<keyword id="KW-0813">Transport</keyword>
<feature type="chain" id="PRO_0000171608" description="Probable flavodoxin 2">
    <location>
        <begin position="1"/>
        <end position="151"/>
    </location>
</feature>
<feature type="domain" description="Flavodoxin-like" evidence="2">
    <location>
        <begin position="4"/>
        <end position="144"/>
    </location>
</feature>
<feature type="binding site" evidence="2">
    <location>
        <begin position="10"/>
        <end position="14"/>
    </location>
    <ligand>
        <name>FMN</name>
        <dbReference type="ChEBI" id="CHEBI:58210"/>
    </ligand>
</feature>
<feature type="binding site" evidence="2">
    <location>
        <begin position="88"/>
        <end position="119"/>
    </location>
    <ligand>
        <name>FMN</name>
        <dbReference type="ChEBI" id="CHEBI:58210"/>
    </ligand>
</feature>
<name>FLAW_BACSU</name>
<comment type="function">
    <text evidence="3">Low-potential electron donor to a number of redox enzymes.</text>
</comment>
<comment type="cofactor">
    <cofactor evidence="1">
        <name>FMN</name>
        <dbReference type="ChEBI" id="CHEBI:58210"/>
    </cofactor>
</comment>
<comment type="similarity">
    <text evidence="3">Belongs to the flavodoxin family.</text>
</comment>
<comment type="sequence caution" evidence="3">
    <conflict type="frameshift">
        <sequence resource="EMBL-CDS" id="CAA10879"/>
    </conflict>
</comment>
<evidence type="ECO:0000250" key="1"/>
<evidence type="ECO:0000255" key="2">
    <source>
        <dbReference type="PROSITE-ProRule" id="PRU00088"/>
    </source>
</evidence>
<evidence type="ECO:0000305" key="3"/>
<gene>
    <name type="primary">ykuP</name>
    <name type="ordered locus">BSU14170</name>
</gene>
<protein>
    <recommendedName>
        <fullName>Probable flavodoxin 2</fullName>
    </recommendedName>
</protein>
<accession>O34589</accession>
<dbReference type="EMBL" id="AJ222587">
    <property type="protein sequence ID" value="CAA10879.1"/>
    <property type="status" value="ALT_FRAME"/>
    <property type="molecule type" value="Genomic_DNA"/>
</dbReference>
<dbReference type="EMBL" id="AL009126">
    <property type="protein sequence ID" value="CAB13290.2"/>
    <property type="molecule type" value="Genomic_DNA"/>
</dbReference>
<dbReference type="PIR" id="E69866">
    <property type="entry name" value="E69866"/>
</dbReference>
<dbReference type="RefSeq" id="WP_003245242.1">
    <property type="nucleotide sequence ID" value="NZ_OZ025638.1"/>
</dbReference>
<dbReference type="SMR" id="O34589"/>
<dbReference type="FunCoup" id="O34589">
    <property type="interactions" value="58"/>
</dbReference>
<dbReference type="STRING" id="224308.BSU14170"/>
<dbReference type="jPOST" id="O34589"/>
<dbReference type="PaxDb" id="224308-BSU14170"/>
<dbReference type="EnsemblBacteria" id="CAB13290">
    <property type="protein sequence ID" value="CAB13290"/>
    <property type="gene ID" value="BSU_14170"/>
</dbReference>
<dbReference type="GeneID" id="938811"/>
<dbReference type="KEGG" id="bsu:BSU14170"/>
<dbReference type="PATRIC" id="fig|224308.179.peg.1546"/>
<dbReference type="eggNOG" id="COG0716">
    <property type="taxonomic scope" value="Bacteria"/>
</dbReference>
<dbReference type="InParanoid" id="O34589"/>
<dbReference type="OrthoDB" id="9790745at2"/>
<dbReference type="PhylomeDB" id="O34589"/>
<dbReference type="BioCyc" id="BSUB:BSU14170-MONOMER"/>
<dbReference type="Proteomes" id="UP000001570">
    <property type="component" value="Chromosome"/>
</dbReference>
<dbReference type="GO" id="GO:0009055">
    <property type="term" value="F:electron transfer activity"/>
    <property type="evidence" value="ECO:0007669"/>
    <property type="project" value="InterPro"/>
</dbReference>
<dbReference type="GO" id="GO:0010181">
    <property type="term" value="F:FMN binding"/>
    <property type="evidence" value="ECO:0007669"/>
    <property type="project" value="InterPro"/>
</dbReference>
<dbReference type="GO" id="GO:0016651">
    <property type="term" value="F:oxidoreductase activity, acting on NAD(P)H"/>
    <property type="evidence" value="ECO:0007669"/>
    <property type="project" value="UniProtKB-ARBA"/>
</dbReference>
<dbReference type="Gene3D" id="3.40.50.360">
    <property type="match status" value="1"/>
</dbReference>
<dbReference type="InterPro" id="IPR010087">
    <property type="entry name" value="Flav_short"/>
</dbReference>
<dbReference type="InterPro" id="IPR001094">
    <property type="entry name" value="Flavdoxin-like"/>
</dbReference>
<dbReference type="InterPro" id="IPR050619">
    <property type="entry name" value="Flavodoxin"/>
</dbReference>
<dbReference type="InterPro" id="IPR008254">
    <property type="entry name" value="Flavodoxin/NO_synth"/>
</dbReference>
<dbReference type="InterPro" id="IPR001226">
    <property type="entry name" value="Flavodoxin_CS"/>
</dbReference>
<dbReference type="InterPro" id="IPR029039">
    <property type="entry name" value="Flavoprotein-like_sf"/>
</dbReference>
<dbReference type="NCBIfam" id="TIGR01753">
    <property type="entry name" value="flav_short"/>
    <property type="match status" value="1"/>
</dbReference>
<dbReference type="NCBIfam" id="NF005216">
    <property type="entry name" value="PRK06703.1"/>
    <property type="match status" value="1"/>
</dbReference>
<dbReference type="NCBIfam" id="NF005246">
    <property type="entry name" value="PRK06756.1"/>
    <property type="match status" value="1"/>
</dbReference>
<dbReference type="PANTHER" id="PTHR42809:SF1">
    <property type="entry name" value="FLAVODOXIN 1"/>
    <property type="match status" value="1"/>
</dbReference>
<dbReference type="PANTHER" id="PTHR42809">
    <property type="entry name" value="FLAVODOXIN 2"/>
    <property type="match status" value="1"/>
</dbReference>
<dbReference type="Pfam" id="PF00258">
    <property type="entry name" value="Flavodoxin_1"/>
    <property type="match status" value="1"/>
</dbReference>
<dbReference type="PRINTS" id="PR00369">
    <property type="entry name" value="FLAVODOXIN"/>
</dbReference>
<dbReference type="SUPFAM" id="SSF52218">
    <property type="entry name" value="Flavoproteins"/>
    <property type="match status" value="1"/>
</dbReference>
<dbReference type="PROSITE" id="PS00201">
    <property type="entry name" value="FLAVODOXIN"/>
    <property type="match status" value="1"/>
</dbReference>
<dbReference type="PROSITE" id="PS50902">
    <property type="entry name" value="FLAVODOXIN_LIKE"/>
    <property type="match status" value="1"/>
</dbReference>
<organism>
    <name type="scientific">Bacillus subtilis (strain 168)</name>
    <dbReference type="NCBI Taxonomy" id="224308"/>
    <lineage>
        <taxon>Bacteria</taxon>
        <taxon>Bacillati</taxon>
        <taxon>Bacillota</taxon>
        <taxon>Bacilli</taxon>
        <taxon>Bacillales</taxon>
        <taxon>Bacillaceae</taxon>
        <taxon>Bacillus</taxon>
    </lineage>
</organism>
<proteinExistence type="inferred from homology"/>
<reference key="1">
    <citation type="submission" date="1997-11" db="EMBL/GenBank/DDBJ databases">
        <authorList>
            <person name="Scanlan E."/>
            <person name="Devine K.M."/>
        </authorList>
    </citation>
    <scope>NUCLEOTIDE SEQUENCE [GENOMIC DNA]</scope>
    <source>
        <strain>168</strain>
    </source>
</reference>
<reference key="2">
    <citation type="journal article" date="1997" name="Nature">
        <title>The complete genome sequence of the Gram-positive bacterium Bacillus subtilis.</title>
        <authorList>
            <person name="Kunst F."/>
            <person name="Ogasawara N."/>
            <person name="Moszer I."/>
            <person name="Albertini A.M."/>
            <person name="Alloni G."/>
            <person name="Azevedo V."/>
            <person name="Bertero M.G."/>
            <person name="Bessieres P."/>
            <person name="Bolotin A."/>
            <person name="Borchert S."/>
            <person name="Borriss R."/>
            <person name="Boursier L."/>
            <person name="Brans A."/>
            <person name="Braun M."/>
            <person name="Brignell S.C."/>
            <person name="Bron S."/>
            <person name="Brouillet S."/>
            <person name="Bruschi C.V."/>
            <person name="Caldwell B."/>
            <person name="Capuano V."/>
            <person name="Carter N.M."/>
            <person name="Choi S.-K."/>
            <person name="Codani J.-J."/>
            <person name="Connerton I.F."/>
            <person name="Cummings N.J."/>
            <person name="Daniel R.A."/>
            <person name="Denizot F."/>
            <person name="Devine K.M."/>
            <person name="Duesterhoeft A."/>
            <person name="Ehrlich S.D."/>
            <person name="Emmerson P.T."/>
            <person name="Entian K.-D."/>
            <person name="Errington J."/>
            <person name="Fabret C."/>
            <person name="Ferrari E."/>
            <person name="Foulger D."/>
            <person name="Fritz C."/>
            <person name="Fujita M."/>
            <person name="Fujita Y."/>
            <person name="Fuma S."/>
            <person name="Galizzi A."/>
            <person name="Galleron N."/>
            <person name="Ghim S.-Y."/>
            <person name="Glaser P."/>
            <person name="Goffeau A."/>
            <person name="Golightly E.J."/>
            <person name="Grandi G."/>
            <person name="Guiseppi G."/>
            <person name="Guy B.J."/>
            <person name="Haga K."/>
            <person name="Haiech J."/>
            <person name="Harwood C.R."/>
            <person name="Henaut A."/>
            <person name="Hilbert H."/>
            <person name="Holsappel S."/>
            <person name="Hosono S."/>
            <person name="Hullo M.-F."/>
            <person name="Itaya M."/>
            <person name="Jones L.-M."/>
            <person name="Joris B."/>
            <person name="Karamata D."/>
            <person name="Kasahara Y."/>
            <person name="Klaerr-Blanchard M."/>
            <person name="Klein C."/>
            <person name="Kobayashi Y."/>
            <person name="Koetter P."/>
            <person name="Koningstein G."/>
            <person name="Krogh S."/>
            <person name="Kumano M."/>
            <person name="Kurita K."/>
            <person name="Lapidus A."/>
            <person name="Lardinois S."/>
            <person name="Lauber J."/>
            <person name="Lazarevic V."/>
            <person name="Lee S.-M."/>
            <person name="Levine A."/>
            <person name="Liu H."/>
            <person name="Masuda S."/>
            <person name="Mauel C."/>
            <person name="Medigue C."/>
            <person name="Medina N."/>
            <person name="Mellado R.P."/>
            <person name="Mizuno M."/>
            <person name="Moestl D."/>
            <person name="Nakai S."/>
            <person name="Noback M."/>
            <person name="Noone D."/>
            <person name="O'Reilly M."/>
            <person name="Ogawa K."/>
            <person name="Ogiwara A."/>
            <person name="Oudega B."/>
            <person name="Park S.-H."/>
            <person name="Parro V."/>
            <person name="Pohl T.M."/>
            <person name="Portetelle D."/>
            <person name="Porwollik S."/>
            <person name="Prescott A.M."/>
            <person name="Presecan E."/>
            <person name="Pujic P."/>
            <person name="Purnelle B."/>
            <person name="Rapoport G."/>
            <person name="Rey M."/>
            <person name="Reynolds S."/>
            <person name="Rieger M."/>
            <person name="Rivolta C."/>
            <person name="Rocha E."/>
            <person name="Roche B."/>
            <person name="Rose M."/>
            <person name="Sadaie Y."/>
            <person name="Sato T."/>
            <person name="Scanlan E."/>
            <person name="Schleich S."/>
            <person name="Schroeter R."/>
            <person name="Scoffone F."/>
            <person name="Sekiguchi J."/>
            <person name="Sekowska A."/>
            <person name="Seror S.J."/>
            <person name="Serror P."/>
            <person name="Shin B.-S."/>
            <person name="Soldo B."/>
            <person name="Sorokin A."/>
            <person name="Tacconi E."/>
            <person name="Takagi T."/>
            <person name="Takahashi H."/>
            <person name="Takemaru K."/>
            <person name="Takeuchi M."/>
            <person name="Tamakoshi A."/>
            <person name="Tanaka T."/>
            <person name="Terpstra P."/>
            <person name="Tognoni A."/>
            <person name="Tosato V."/>
            <person name="Uchiyama S."/>
            <person name="Vandenbol M."/>
            <person name="Vannier F."/>
            <person name="Vassarotti A."/>
            <person name="Viari A."/>
            <person name="Wambutt R."/>
            <person name="Wedler E."/>
            <person name="Wedler H."/>
            <person name="Weitzenegger T."/>
            <person name="Winters P."/>
            <person name="Wipat A."/>
            <person name="Yamamoto H."/>
            <person name="Yamane K."/>
            <person name="Yasumoto K."/>
            <person name="Yata K."/>
            <person name="Yoshida K."/>
            <person name="Yoshikawa H.-F."/>
            <person name="Zumstein E."/>
            <person name="Yoshikawa H."/>
            <person name="Danchin A."/>
        </authorList>
    </citation>
    <scope>NUCLEOTIDE SEQUENCE [LARGE SCALE GENOMIC DNA]</scope>
    <source>
        <strain>168</strain>
    </source>
</reference>
<reference key="3">
    <citation type="journal article" date="2009" name="Microbiology">
        <title>From a consortium sequence to a unified sequence: the Bacillus subtilis 168 reference genome a decade later.</title>
        <authorList>
            <person name="Barbe V."/>
            <person name="Cruveiller S."/>
            <person name="Kunst F."/>
            <person name="Lenoble P."/>
            <person name="Meurice G."/>
            <person name="Sekowska A."/>
            <person name="Vallenet D."/>
            <person name="Wang T."/>
            <person name="Moszer I."/>
            <person name="Medigue C."/>
            <person name="Danchin A."/>
        </authorList>
    </citation>
    <scope>SEQUENCE REVISION TO C-TERMINUS</scope>
</reference>
<sequence length="151" mass="16643">MAKILLVYATMSGNTEAMADLIEKGLQEALAEVDRFEAMDIDDAQLFTDYDHVIMGTYTWGDGDLPDEFLDLVEDMEEIDFSGKTCAVFGSGDTAYEFFCGAVDTLEAKIKERGGDIVLPSVKIENNPEGEEEEELINFGRQFAKKSGCAV</sequence>